<gene>
    <name evidence="1" type="primary">murC</name>
    <name type="ordered locus">AZC_4556</name>
</gene>
<evidence type="ECO:0000255" key="1">
    <source>
        <dbReference type="HAMAP-Rule" id="MF_00046"/>
    </source>
</evidence>
<sequence length="467" mass="50013">MKLPEALGSIHFVGIGGIGMSGIAEVLNNLGYTVQGSDVAENANVKRLRENGIAVTVGHKAENIDGAEVVVVSSAIKRDNPELLAARAKRLPVVRRAEMLAELMRLKSCVAIAGTHGKTTTTSLVATLLDKGGFDPTVINGGIINAYGTNARLGAGDWMVVEADESDGTFLKLPAEVAIITNIDPEHLDHFKTFDKVQEAFRTFVENVPFYGFAVMCIDHPVVQALVGRIEDRRIITYGENPQADVRLVDVDLRGGITRFGVVFRDRAGTAEHRIDGLKLPMPGKHNALNATAAIAVARELRVPDDRIIEAIGGFGGVKRRFTRTGEWKGATIFDDYGHHPVEISAVLRAARAATEGQVIAVVQPHRYTRLASLFDEFCTCFNDADHVIVAPVYAAGESPVPGADSEHLVQGLRARGHRSVTALKGPEELAGLVAGLAKPGDFVICLGAGTITQWAYALPGELEKLG</sequence>
<reference key="1">
    <citation type="submission" date="2007-04" db="EMBL/GenBank/DDBJ databases">
        <title>Complete genome sequence of the nitrogen-fixing bacterium Azorhizobium caulinodans ORS571.</title>
        <authorList>
            <person name="Lee K.B."/>
            <person name="Backer P.D."/>
            <person name="Aono T."/>
            <person name="Liu C.T."/>
            <person name="Suzuki S."/>
            <person name="Suzuki T."/>
            <person name="Kaneko T."/>
            <person name="Yamada M."/>
            <person name="Tabata S."/>
            <person name="Kupfer D.M."/>
            <person name="Najar F.Z."/>
            <person name="Wiley G.B."/>
            <person name="Roe B."/>
            <person name="Binnewies T."/>
            <person name="Ussery D."/>
            <person name="Vereecke D."/>
            <person name="Gevers D."/>
            <person name="Holsters M."/>
            <person name="Oyaizu H."/>
        </authorList>
    </citation>
    <scope>NUCLEOTIDE SEQUENCE [LARGE SCALE GENOMIC DNA]</scope>
    <source>
        <strain>ATCC 43989 / DSM 5975 / JCM 20966 / LMG 6465 / NBRC 14845 / NCIMB 13405 / ORS 571</strain>
    </source>
</reference>
<protein>
    <recommendedName>
        <fullName evidence="1">UDP-N-acetylmuramate--L-alanine ligase</fullName>
        <ecNumber evidence="1">6.3.2.8</ecNumber>
    </recommendedName>
    <alternativeName>
        <fullName evidence="1">UDP-N-acetylmuramoyl-L-alanine synthetase</fullName>
    </alternativeName>
</protein>
<accession>A8HZ95</accession>
<name>MURC_AZOC5</name>
<proteinExistence type="inferred from homology"/>
<feature type="chain" id="PRO_1000071094" description="UDP-N-acetylmuramate--L-alanine ligase">
    <location>
        <begin position="1"/>
        <end position="467"/>
    </location>
</feature>
<feature type="binding site" evidence="1">
    <location>
        <begin position="114"/>
        <end position="120"/>
    </location>
    <ligand>
        <name>ATP</name>
        <dbReference type="ChEBI" id="CHEBI:30616"/>
    </ligand>
</feature>
<comment type="function">
    <text evidence="1">Cell wall formation.</text>
</comment>
<comment type="catalytic activity">
    <reaction evidence="1">
        <text>UDP-N-acetyl-alpha-D-muramate + L-alanine + ATP = UDP-N-acetyl-alpha-D-muramoyl-L-alanine + ADP + phosphate + H(+)</text>
        <dbReference type="Rhea" id="RHEA:23372"/>
        <dbReference type="ChEBI" id="CHEBI:15378"/>
        <dbReference type="ChEBI" id="CHEBI:30616"/>
        <dbReference type="ChEBI" id="CHEBI:43474"/>
        <dbReference type="ChEBI" id="CHEBI:57972"/>
        <dbReference type="ChEBI" id="CHEBI:70757"/>
        <dbReference type="ChEBI" id="CHEBI:83898"/>
        <dbReference type="ChEBI" id="CHEBI:456216"/>
        <dbReference type="EC" id="6.3.2.8"/>
    </reaction>
</comment>
<comment type="pathway">
    <text evidence="1">Cell wall biogenesis; peptidoglycan biosynthesis.</text>
</comment>
<comment type="subcellular location">
    <subcellularLocation>
        <location evidence="1">Cytoplasm</location>
    </subcellularLocation>
</comment>
<comment type="similarity">
    <text evidence="1">Belongs to the MurCDEF family.</text>
</comment>
<keyword id="KW-0067">ATP-binding</keyword>
<keyword id="KW-0131">Cell cycle</keyword>
<keyword id="KW-0132">Cell division</keyword>
<keyword id="KW-0133">Cell shape</keyword>
<keyword id="KW-0961">Cell wall biogenesis/degradation</keyword>
<keyword id="KW-0963">Cytoplasm</keyword>
<keyword id="KW-0436">Ligase</keyword>
<keyword id="KW-0547">Nucleotide-binding</keyword>
<keyword id="KW-0573">Peptidoglycan synthesis</keyword>
<keyword id="KW-1185">Reference proteome</keyword>
<organism>
    <name type="scientific">Azorhizobium caulinodans (strain ATCC 43989 / DSM 5975 / JCM 20966 / LMG 6465 / NBRC 14845 / NCIMB 13405 / ORS 571)</name>
    <dbReference type="NCBI Taxonomy" id="438753"/>
    <lineage>
        <taxon>Bacteria</taxon>
        <taxon>Pseudomonadati</taxon>
        <taxon>Pseudomonadota</taxon>
        <taxon>Alphaproteobacteria</taxon>
        <taxon>Hyphomicrobiales</taxon>
        <taxon>Xanthobacteraceae</taxon>
        <taxon>Azorhizobium</taxon>
    </lineage>
</organism>
<dbReference type="EC" id="6.3.2.8" evidence="1"/>
<dbReference type="EMBL" id="AP009384">
    <property type="protein sequence ID" value="BAF90554.1"/>
    <property type="molecule type" value="Genomic_DNA"/>
</dbReference>
<dbReference type="RefSeq" id="WP_012173075.1">
    <property type="nucleotide sequence ID" value="NC_009937.1"/>
</dbReference>
<dbReference type="SMR" id="A8HZ95"/>
<dbReference type="STRING" id="438753.AZC_4556"/>
<dbReference type="KEGG" id="azc:AZC_4556"/>
<dbReference type="eggNOG" id="COG0773">
    <property type="taxonomic scope" value="Bacteria"/>
</dbReference>
<dbReference type="HOGENOM" id="CLU_028104_2_2_5"/>
<dbReference type="UniPathway" id="UPA00219"/>
<dbReference type="Proteomes" id="UP000000270">
    <property type="component" value="Chromosome"/>
</dbReference>
<dbReference type="GO" id="GO:0005737">
    <property type="term" value="C:cytoplasm"/>
    <property type="evidence" value="ECO:0007669"/>
    <property type="project" value="UniProtKB-SubCell"/>
</dbReference>
<dbReference type="GO" id="GO:0005524">
    <property type="term" value="F:ATP binding"/>
    <property type="evidence" value="ECO:0007669"/>
    <property type="project" value="UniProtKB-UniRule"/>
</dbReference>
<dbReference type="GO" id="GO:0008763">
    <property type="term" value="F:UDP-N-acetylmuramate-L-alanine ligase activity"/>
    <property type="evidence" value="ECO:0007669"/>
    <property type="project" value="UniProtKB-UniRule"/>
</dbReference>
<dbReference type="GO" id="GO:0051301">
    <property type="term" value="P:cell division"/>
    <property type="evidence" value="ECO:0007669"/>
    <property type="project" value="UniProtKB-KW"/>
</dbReference>
<dbReference type="GO" id="GO:0071555">
    <property type="term" value="P:cell wall organization"/>
    <property type="evidence" value="ECO:0007669"/>
    <property type="project" value="UniProtKB-KW"/>
</dbReference>
<dbReference type="GO" id="GO:0009252">
    <property type="term" value="P:peptidoglycan biosynthetic process"/>
    <property type="evidence" value="ECO:0007669"/>
    <property type="project" value="UniProtKB-UniRule"/>
</dbReference>
<dbReference type="GO" id="GO:0008360">
    <property type="term" value="P:regulation of cell shape"/>
    <property type="evidence" value="ECO:0007669"/>
    <property type="project" value="UniProtKB-KW"/>
</dbReference>
<dbReference type="Gene3D" id="3.90.190.20">
    <property type="entry name" value="Mur ligase, C-terminal domain"/>
    <property type="match status" value="1"/>
</dbReference>
<dbReference type="Gene3D" id="3.40.1190.10">
    <property type="entry name" value="Mur-like, catalytic domain"/>
    <property type="match status" value="1"/>
</dbReference>
<dbReference type="Gene3D" id="3.40.50.720">
    <property type="entry name" value="NAD(P)-binding Rossmann-like Domain"/>
    <property type="match status" value="1"/>
</dbReference>
<dbReference type="HAMAP" id="MF_00046">
    <property type="entry name" value="MurC"/>
    <property type="match status" value="1"/>
</dbReference>
<dbReference type="InterPro" id="IPR036565">
    <property type="entry name" value="Mur-like_cat_sf"/>
</dbReference>
<dbReference type="InterPro" id="IPR004101">
    <property type="entry name" value="Mur_ligase_C"/>
</dbReference>
<dbReference type="InterPro" id="IPR036615">
    <property type="entry name" value="Mur_ligase_C_dom_sf"/>
</dbReference>
<dbReference type="InterPro" id="IPR013221">
    <property type="entry name" value="Mur_ligase_cen"/>
</dbReference>
<dbReference type="InterPro" id="IPR000713">
    <property type="entry name" value="Mur_ligase_N"/>
</dbReference>
<dbReference type="InterPro" id="IPR050061">
    <property type="entry name" value="MurCDEF_pg_biosynth"/>
</dbReference>
<dbReference type="InterPro" id="IPR005758">
    <property type="entry name" value="UDP-N-AcMur_Ala_ligase_MurC"/>
</dbReference>
<dbReference type="NCBIfam" id="TIGR01082">
    <property type="entry name" value="murC"/>
    <property type="match status" value="1"/>
</dbReference>
<dbReference type="PANTHER" id="PTHR43445:SF3">
    <property type="entry name" value="UDP-N-ACETYLMURAMATE--L-ALANINE LIGASE"/>
    <property type="match status" value="1"/>
</dbReference>
<dbReference type="PANTHER" id="PTHR43445">
    <property type="entry name" value="UDP-N-ACETYLMURAMATE--L-ALANINE LIGASE-RELATED"/>
    <property type="match status" value="1"/>
</dbReference>
<dbReference type="Pfam" id="PF01225">
    <property type="entry name" value="Mur_ligase"/>
    <property type="match status" value="1"/>
</dbReference>
<dbReference type="Pfam" id="PF02875">
    <property type="entry name" value="Mur_ligase_C"/>
    <property type="match status" value="1"/>
</dbReference>
<dbReference type="Pfam" id="PF08245">
    <property type="entry name" value="Mur_ligase_M"/>
    <property type="match status" value="1"/>
</dbReference>
<dbReference type="SUPFAM" id="SSF51984">
    <property type="entry name" value="MurCD N-terminal domain"/>
    <property type="match status" value="1"/>
</dbReference>
<dbReference type="SUPFAM" id="SSF53623">
    <property type="entry name" value="MurD-like peptide ligases, catalytic domain"/>
    <property type="match status" value="1"/>
</dbReference>
<dbReference type="SUPFAM" id="SSF53244">
    <property type="entry name" value="MurD-like peptide ligases, peptide-binding domain"/>
    <property type="match status" value="1"/>
</dbReference>